<dbReference type="PIR" id="A02973">
    <property type="entry name" value="UBPGB"/>
</dbReference>
<dbReference type="PDB" id="1FFX">
    <property type="method" value="X-ray"/>
    <property type="resolution" value="3.95 A"/>
    <property type="chains" value="B/D=1-445"/>
</dbReference>
<dbReference type="PDB" id="1IA0">
    <property type="method" value="EM"/>
    <property type="resolution" value="15.00 A"/>
    <property type="chains" value="B=1-445"/>
</dbReference>
<dbReference type="PDB" id="1JFF">
    <property type="method" value="X-ray"/>
    <property type="resolution" value="3.50 A"/>
    <property type="chains" value="B=1-445"/>
</dbReference>
<dbReference type="PDB" id="1TUB">
    <property type="method" value="X-ray"/>
    <property type="resolution" value="3.70 A"/>
    <property type="chains" value="B=1-427"/>
</dbReference>
<dbReference type="PDB" id="2HXF">
    <property type="method" value="EM"/>
    <property type="resolution" value="10.00 A"/>
    <property type="chains" value="B=1-445"/>
</dbReference>
<dbReference type="PDB" id="2HXH">
    <property type="method" value="EM"/>
    <property type="resolution" value="11.00 A"/>
    <property type="chains" value="B=1-445"/>
</dbReference>
<dbReference type="PDB" id="3EDL">
    <property type="method" value="EM"/>
    <property type="resolution" value="28.00 A"/>
    <property type="chains" value="B/G=1-445"/>
</dbReference>
<dbReference type="PDB" id="3J6E">
    <property type="method" value="EM"/>
    <property type="resolution" value="4.70 A"/>
    <property type="chains" value="B/D/F/H/J/L/N/P/R=1-427"/>
</dbReference>
<dbReference type="PDB" id="3J6F">
    <property type="method" value="EM"/>
    <property type="resolution" value="4.90 A"/>
    <property type="chains" value="B/D/F/H/J/L/N/P/R=1-427"/>
</dbReference>
<dbReference type="PDB" id="3J6G">
    <property type="method" value="EM"/>
    <property type="resolution" value="5.50 A"/>
    <property type="chains" value="B/D/F/H/J/L/N/P/R=1-427"/>
</dbReference>
<dbReference type="PDB" id="3J6H">
    <property type="method" value="EM"/>
    <property type="resolution" value="8.10 A"/>
    <property type="chains" value="B=2-427"/>
</dbReference>
<dbReference type="PDB" id="3J6P">
    <property type="method" value="EM"/>
    <property type="resolution" value="8.20 A"/>
    <property type="chains" value="B=1-445"/>
</dbReference>
<dbReference type="PDB" id="3J7I">
    <property type="method" value="EM"/>
    <property type="resolution" value="8.90 A"/>
    <property type="chains" value="B=1-445"/>
</dbReference>
<dbReference type="PDB" id="3JAK">
    <property type="method" value="EM"/>
    <property type="resolution" value="3.50 A"/>
    <property type="chains" value="B/D/F/G/H/I=1-445"/>
</dbReference>
<dbReference type="PDB" id="3JAL">
    <property type="method" value="EM"/>
    <property type="resolution" value="3.50 A"/>
    <property type="chains" value="B/D/F/G/H/I=1-445"/>
</dbReference>
<dbReference type="PDB" id="3JAR">
    <property type="method" value="EM"/>
    <property type="resolution" value="3.50 A"/>
    <property type="chains" value="B/D/F/G/H/I=1-445"/>
</dbReference>
<dbReference type="PDB" id="3JAS">
    <property type="method" value="EM"/>
    <property type="resolution" value="3.50 A"/>
    <property type="chains" value="B/D/F/G/H/I=1-445"/>
</dbReference>
<dbReference type="PDB" id="3JAT">
    <property type="method" value="EM"/>
    <property type="resolution" value="3.50 A"/>
    <property type="chains" value="B/D/F/G/H/I=1-445"/>
</dbReference>
<dbReference type="PDB" id="3JAW">
    <property type="method" value="EM"/>
    <property type="resolution" value="3.90 A"/>
    <property type="chains" value="B/D=1-445"/>
</dbReference>
<dbReference type="PDB" id="4ABO">
    <property type="method" value="EM"/>
    <property type="resolution" value="8.60 A"/>
    <property type="chains" value="A/C/E/G=1-445"/>
</dbReference>
<dbReference type="PDB" id="4ZHQ">
    <property type="method" value="X-ray"/>
    <property type="resolution" value="2.55 A"/>
    <property type="chains" value="B/D=1-445"/>
</dbReference>
<dbReference type="PDB" id="4ZI7">
    <property type="method" value="X-ray"/>
    <property type="resolution" value="2.51 A"/>
    <property type="chains" value="B/D=1-445"/>
</dbReference>
<dbReference type="PDB" id="4ZOL">
    <property type="method" value="X-ray"/>
    <property type="resolution" value="2.50 A"/>
    <property type="chains" value="B/D=1-445"/>
</dbReference>
<dbReference type="PDB" id="5BMV">
    <property type="method" value="X-ray"/>
    <property type="resolution" value="2.50 A"/>
    <property type="chains" value="B/D=1-445"/>
</dbReference>
<dbReference type="PDB" id="5FNV">
    <property type="method" value="X-ray"/>
    <property type="resolution" value="2.61 A"/>
    <property type="chains" value="B/D=1-445"/>
</dbReference>
<dbReference type="PDB" id="5HNW">
    <property type="method" value="EM"/>
    <property type="resolution" value="6.60 A"/>
    <property type="chains" value="B=2-445"/>
</dbReference>
<dbReference type="PDB" id="5HNX">
    <property type="method" value="EM"/>
    <property type="resolution" value="6.60 A"/>
    <property type="chains" value="B=1-445"/>
</dbReference>
<dbReference type="PDB" id="5HNY">
    <property type="method" value="EM"/>
    <property type="resolution" value="6.30 A"/>
    <property type="chains" value="B=2-427"/>
</dbReference>
<dbReference type="PDB" id="5HNZ">
    <property type="method" value="EM"/>
    <property type="resolution" value="5.80 A"/>
    <property type="chains" value="B=1-445"/>
</dbReference>
<dbReference type="PDB" id="5JCB">
    <property type="method" value="X-ray"/>
    <property type="resolution" value="2.30 A"/>
    <property type="chains" value="B/D=1-445"/>
</dbReference>
<dbReference type="PDB" id="5JQG">
    <property type="method" value="X-ray"/>
    <property type="resolution" value="2.24 A"/>
    <property type="chains" value="B/D=1-445"/>
</dbReference>
<dbReference type="PDB" id="5KMG">
    <property type="method" value="EM"/>
    <property type="resolution" value="3.50 A"/>
    <property type="chains" value="B=1-431"/>
</dbReference>
<dbReference type="PDB" id="5MM4">
    <property type="method" value="EM"/>
    <property type="resolution" value="4.50 A"/>
    <property type="chains" value="B=1-427"/>
</dbReference>
<dbReference type="PDB" id="5MM7">
    <property type="method" value="EM"/>
    <property type="resolution" value="5.10 A"/>
    <property type="chains" value="B=1-427"/>
</dbReference>
<dbReference type="PDB" id="5OAM">
    <property type="method" value="EM"/>
    <property type="resolution" value="5.50 A"/>
    <property type="chains" value="B=1-445"/>
</dbReference>
<dbReference type="PDB" id="5OCU">
    <property type="method" value="EM"/>
    <property type="resolution" value="5.20 A"/>
    <property type="chains" value="B=1-445"/>
</dbReference>
<dbReference type="PDB" id="5OGC">
    <property type="method" value="EM"/>
    <property type="resolution" value="4.80 A"/>
    <property type="chains" value="B=1-445"/>
</dbReference>
<dbReference type="PDB" id="5SYC">
    <property type="method" value="EM"/>
    <property type="resolution" value="3.50 A"/>
    <property type="chains" value="B=1-426"/>
</dbReference>
<dbReference type="PDB" id="5SYE">
    <property type="method" value="EM"/>
    <property type="resolution" value="3.50 A"/>
    <property type="chains" value="B=1-426"/>
</dbReference>
<dbReference type="PDB" id="5SYF">
    <property type="method" value="EM"/>
    <property type="resolution" value="3.50 A"/>
    <property type="chains" value="B=1-426"/>
</dbReference>
<dbReference type="PDB" id="5SYG">
    <property type="method" value="EM"/>
    <property type="resolution" value="3.50 A"/>
    <property type="chains" value="B=1-426"/>
</dbReference>
<dbReference type="PDB" id="5XIW">
    <property type="method" value="X-ray"/>
    <property type="resolution" value="2.90 A"/>
    <property type="chains" value="B/D=1-445"/>
</dbReference>
<dbReference type="PDB" id="5XKE">
    <property type="method" value="X-ray"/>
    <property type="resolution" value="2.60 A"/>
    <property type="chains" value="B/D=1-445"/>
</dbReference>
<dbReference type="PDB" id="5XKF">
    <property type="method" value="X-ray"/>
    <property type="resolution" value="2.80 A"/>
    <property type="chains" value="B/D=1-445"/>
</dbReference>
<dbReference type="PDB" id="5XKG">
    <property type="method" value="X-ray"/>
    <property type="resolution" value="2.20 A"/>
    <property type="chains" value="B/D=1-445"/>
</dbReference>
<dbReference type="PDB" id="5XKH">
    <property type="method" value="X-ray"/>
    <property type="resolution" value="2.25 A"/>
    <property type="chains" value="B/D=1-445"/>
</dbReference>
<dbReference type="PDB" id="5XP3">
    <property type="method" value="X-ray"/>
    <property type="resolution" value="2.30 A"/>
    <property type="chains" value="B/D=1-445"/>
</dbReference>
<dbReference type="PDB" id="5XXT">
    <property type="method" value="EM"/>
    <property type="resolution" value="5.35 A"/>
    <property type="chains" value="B/D/F/H/J/L/N/P/R=2-427"/>
</dbReference>
<dbReference type="PDB" id="5XXV">
    <property type="method" value="EM"/>
    <property type="resolution" value="6.46 A"/>
    <property type="chains" value="B/D/F/H/J/L/N/P/R=2-427"/>
</dbReference>
<dbReference type="PDB" id="5XXW">
    <property type="method" value="EM"/>
    <property type="resolution" value="6.00 A"/>
    <property type="chains" value="B/D/F/H/J/L/N/P/R=2-427"/>
</dbReference>
<dbReference type="PDB" id="5XXX">
    <property type="method" value="EM"/>
    <property type="resolution" value="6.43 A"/>
    <property type="chains" value="B/D/F/H/J/L/N/P/R=2-427"/>
</dbReference>
<dbReference type="PDB" id="5YL2">
    <property type="method" value="X-ray"/>
    <property type="resolution" value="2.09 A"/>
    <property type="chains" value="B/D=1-445"/>
</dbReference>
<dbReference type="PDB" id="5YLJ">
    <property type="method" value="X-ray"/>
    <property type="resolution" value="2.70 A"/>
    <property type="chains" value="B/D=1-445"/>
</dbReference>
<dbReference type="PDB" id="5YLS">
    <property type="method" value="X-ray"/>
    <property type="resolution" value="3.00 A"/>
    <property type="chains" value="B/D=1-445"/>
</dbReference>
<dbReference type="PDB" id="6B0C">
    <property type="method" value="EM"/>
    <property type="resolution" value="3.51 A"/>
    <property type="chains" value="B/D=1-445"/>
</dbReference>
<dbReference type="PDB" id="6B0I">
    <property type="method" value="EM"/>
    <property type="resolution" value="3.78 A"/>
    <property type="chains" value="B=1-445"/>
</dbReference>
<dbReference type="PDB" id="6B0L">
    <property type="method" value="EM"/>
    <property type="resolution" value="3.98 A"/>
    <property type="chains" value="B=1-445"/>
</dbReference>
<dbReference type="PDB" id="6BJC">
    <property type="method" value="EM"/>
    <property type="resolution" value="3.30 A"/>
    <property type="chains" value="B/D/F/G/H/I=1-445"/>
</dbReference>
<dbReference type="PDB" id="6BR1">
    <property type="method" value="X-ray"/>
    <property type="resolution" value="2.30 A"/>
    <property type="chains" value="B/D=1-445"/>
</dbReference>
<dbReference type="PDB" id="6BRF">
    <property type="method" value="X-ray"/>
    <property type="resolution" value="2.50 A"/>
    <property type="chains" value="B/D=1-445"/>
</dbReference>
<dbReference type="PDB" id="6BRY">
    <property type="method" value="X-ray"/>
    <property type="resolution" value="2.70 A"/>
    <property type="chains" value="B/D=1-445"/>
</dbReference>
<dbReference type="PDB" id="6BS2">
    <property type="method" value="X-ray"/>
    <property type="resolution" value="2.65 A"/>
    <property type="chains" value="B/D=1-445"/>
</dbReference>
<dbReference type="PDB" id="6CVJ">
    <property type="method" value="EM"/>
    <property type="resolution" value="3.20 A"/>
    <property type="chains" value="B/C=1-445"/>
</dbReference>
<dbReference type="PDB" id="6CVN">
    <property type="method" value="EM"/>
    <property type="resolution" value="3.90 A"/>
    <property type="chains" value="A/C=1-445"/>
</dbReference>
<dbReference type="PDB" id="6D88">
    <property type="method" value="X-ray"/>
    <property type="resolution" value="2.85 A"/>
    <property type="chains" value="B/D=1-445"/>
</dbReference>
<dbReference type="PDB" id="6DPU">
    <property type="method" value="EM"/>
    <property type="resolution" value="3.10 A"/>
    <property type="chains" value="B/D/F/G/H/I=1-445"/>
</dbReference>
<dbReference type="PDB" id="6DPV">
    <property type="method" value="EM"/>
    <property type="resolution" value="3.30 A"/>
    <property type="chains" value="B/D/F/G/H/I=1-445"/>
</dbReference>
<dbReference type="PDB" id="6DPW">
    <property type="method" value="EM"/>
    <property type="resolution" value="3.50 A"/>
    <property type="chains" value="B/D/F/G/H/I=1-445"/>
</dbReference>
<dbReference type="PDB" id="6EVW">
    <property type="method" value="EM"/>
    <property type="resolution" value="4.40 A"/>
    <property type="chains" value="B/D/F/G/H/I=1-429"/>
</dbReference>
<dbReference type="PDB" id="6EVX">
    <property type="method" value="EM"/>
    <property type="resolution" value="4.20 A"/>
    <property type="chains" value="B/D/F/G/H/I=1-445"/>
</dbReference>
<dbReference type="PDB" id="6EVY">
    <property type="method" value="EM"/>
    <property type="resolution" value="4.40 A"/>
    <property type="chains" value="B/D/F/G/H/I=1-445"/>
</dbReference>
<dbReference type="PDB" id="6EVZ">
    <property type="method" value="EM"/>
    <property type="resolution" value="3.80 A"/>
    <property type="chains" value="B/D/F/G/H/I=1-445"/>
</dbReference>
<dbReference type="PDB" id="6EW0">
    <property type="method" value="EM"/>
    <property type="resolution" value="3.80 A"/>
    <property type="chains" value="B/D/F/G/H/I=1-445"/>
</dbReference>
<dbReference type="PDB" id="6KIO">
    <property type="method" value="EM"/>
    <property type="resolution" value="3.94 A"/>
    <property type="chains" value="b=2-427"/>
</dbReference>
<dbReference type="PDB" id="6KIQ">
    <property type="method" value="EM"/>
    <property type="resolution" value="3.62 A"/>
    <property type="chains" value="b=2-427"/>
</dbReference>
<dbReference type="PDB" id="6KPP">
    <property type="method" value="X-ray"/>
    <property type="resolution" value="2.75 A"/>
    <property type="chains" value="B/D=1-445"/>
</dbReference>
<dbReference type="PDB" id="6LS4">
    <property type="method" value="X-ray"/>
    <property type="resolution" value="2.40 A"/>
    <property type="chains" value="B/D=1-445"/>
</dbReference>
<dbReference type="PDB" id="6LSM">
    <property type="method" value="X-ray"/>
    <property type="resolution" value="2.75 A"/>
    <property type="chains" value="B/D=1-445"/>
</dbReference>
<dbReference type="PDB" id="6LSN">
    <property type="method" value="X-ray"/>
    <property type="resolution" value="2.44 A"/>
    <property type="chains" value="B/D=1-445"/>
</dbReference>
<dbReference type="PDB" id="6MLQ">
    <property type="method" value="EM"/>
    <property type="resolution" value="4.20 A"/>
    <property type="chains" value="B=1-445"/>
</dbReference>
<dbReference type="PDB" id="6MLR">
    <property type="method" value="EM"/>
    <property type="resolution" value="4.20 A"/>
    <property type="chains" value="B=1-445"/>
</dbReference>
<dbReference type="PDB" id="6MZE">
    <property type="method" value="X-ray"/>
    <property type="resolution" value="3.60 A"/>
    <property type="chains" value="B/D/I/K/P/R/W/Y=1-445"/>
</dbReference>
<dbReference type="PDB" id="6MZF">
    <property type="method" value="X-ray"/>
    <property type="resolution" value="4.40 A"/>
    <property type="chains" value="B/D/I/K/P/R/W/Y=1-445"/>
</dbReference>
<dbReference type="PDB" id="6MZG">
    <property type="method" value="X-ray"/>
    <property type="resolution" value="3.21 A"/>
    <property type="chains" value="B/D/H/J=1-445"/>
</dbReference>
<dbReference type="PDB" id="6NNG">
    <property type="method" value="X-ray"/>
    <property type="resolution" value="2.40 A"/>
    <property type="chains" value="B/D=1-445"/>
</dbReference>
<dbReference type="PDB" id="6O2Q">
    <property type="method" value="EM"/>
    <property type="resolution" value="3.70 A"/>
    <property type="chains" value="B/D/F/G/H/I=1-445"/>
</dbReference>
<dbReference type="PDB" id="6O2R">
    <property type="method" value="EM"/>
    <property type="resolution" value="3.30 A"/>
    <property type="chains" value="B/D/F/G/H/I=1-445"/>
</dbReference>
<dbReference type="PDB" id="6O2S">
    <property type="method" value="EM"/>
    <property type="resolution" value="4.00 A"/>
    <property type="chains" value="1H/1O/1P/1Q/1R/1S/1T/1U/1V/1W/1X/1Y/1Z/2H/2O/2P/2Q/2R/2S/2T/2U/2V/2W/2X/2Y/2Z/3H/3O/3P/3Q=1-445"/>
</dbReference>
<dbReference type="PDB" id="6O2T">
    <property type="method" value="EM"/>
    <property type="resolution" value="4.10 A"/>
    <property type="chains" value="1H/1O/1P/1Q/1R/1S/1T/1U/1V/1W/1X/1Y/1Z/2H/2O/2P/2Q/2R/2S/2T/2U/2V/2W/2X/2Y/2Z/3H/3O/3P/3Q=1-445"/>
</dbReference>
<dbReference type="PDB" id="6O5M">
    <property type="method" value="X-ray"/>
    <property type="resolution" value="2.30 A"/>
    <property type="chains" value="B/D=1-445"/>
</dbReference>
<dbReference type="PDB" id="6O5N">
    <property type="method" value="X-ray"/>
    <property type="resolution" value="3.00 A"/>
    <property type="chains" value="B/D=1-445"/>
</dbReference>
<dbReference type="PDB" id="6O61">
    <property type="method" value="X-ray"/>
    <property type="resolution" value="2.60 A"/>
    <property type="chains" value="B/D=1-445"/>
</dbReference>
<dbReference type="PDB" id="6PC4">
    <property type="method" value="X-ray"/>
    <property type="resolution" value="2.60 A"/>
    <property type="chains" value="B/D=1-445"/>
</dbReference>
<dbReference type="PDB" id="6RZA">
    <property type="method" value="EM"/>
    <property type="resolution" value="5.40 A"/>
    <property type="chains" value="B/D=1-426"/>
</dbReference>
<dbReference type="PDB" id="6RZB">
    <property type="method" value="EM"/>
    <property type="resolution" value="5.00 A"/>
    <property type="chains" value="B=1-426"/>
</dbReference>
<dbReference type="PDB" id="6TA3">
    <property type="method" value="EM"/>
    <property type="resolution" value="3.80 A"/>
    <property type="chains" value="B=1-429"/>
</dbReference>
<dbReference type="PDB" id="6TA4">
    <property type="method" value="EM"/>
    <property type="resolution" value="6.10 A"/>
    <property type="chains" value="B=1-429"/>
</dbReference>
<dbReference type="PDB" id="6TIW">
    <property type="method" value="EM"/>
    <property type="resolution" value="1.09 A"/>
    <property type="chains" value="B=1-429"/>
</dbReference>
<dbReference type="PDB" id="6VPO">
    <property type="method" value="EM"/>
    <property type="resolution" value="4.40 A"/>
    <property type="chains" value="B=1-445"/>
</dbReference>
<dbReference type="PDB" id="6VPP">
    <property type="method" value="EM"/>
    <property type="resolution" value="4.40 A"/>
    <property type="chains" value="B=1-445"/>
</dbReference>
<dbReference type="PDB" id="6X1C">
    <property type="method" value="X-ray"/>
    <property type="resolution" value="2.90 A"/>
    <property type="chains" value="B/D=1-445"/>
</dbReference>
<dbReference type="PDB" id="6X1E">
    <property type="method" value="X-ray"/>
    <property type="resolution" value="2.90 A"/>
    <property type="chains" value="B/D=1-445"/>
</dbReference>
<dbReference type="PDB" id="6X1F">
    <property type="method" value="X-ray"/>
    <property type="resolution" value="2.70 A"/>
    <property type="chains" value="B/D=1-445"/>
</dbReference>
<dbReference type="PDB" id="6XER">
    <property type="method" value="X-ray"/>
    <property type="resolution" value="2.50 A"/>
    <property type="chains" value="B/D=1-433"/>
</dbReference>
<dbReference type="PDB" id="6XES">
    <property type="method" value="X-ray"/>
    <property type="resolution" value="2.32 A"/>
    <property type="chains" value="B/D=1-433"/>
</dbReference>
<dbReference type="PDB" id="6XET">
    <property type="method" value="X-ray"/>
    <property type="resolution" value="2.60 A"/>
    <property type="chains" value="B/D=1-433"/>
</dbReference>
<dbReference type="PDB" id="6Y4M">
    <property type="method" value="X-ray"/>
    <property type="resolution" value="3.34 A"/>
    <property type="chains" value="B/D=1-445"/>
</dbReference>
<dbReference type="PDB" id="6Y4N">
    <property type="method" value="X-ray"/>
    <property type="resolution" value="2.85 A"/>
    <property type="chains" value="B/D=1-445"/>
</dbReference>
<dbReference type="PDB" id="6ZPI">
    <property type="method" value="EM"/>
    <property type="resolution" value="4.50 A"/>
    <property type="chains" value="B=1-431"/>
</dbReference>
<dbReference type="PDB" id="7CBZ">
    <property type="method" value="X-ray"/>
    <property type="resolution" value="2.61 A"/>
    <property type="chains" value="B/D=1-445"/>
</dbReference>
<dbReference type="PDB" id="7CDA">
    <property type="method" value="X-ray"/>
    <property type="resolution" value="2.66 A"/>
    <property type="chains" value="B/D=1-445"/>
</dbReference>
<dbReference type="PDB" id="7CE6">
    <property type="method" value="X-ray"/>
    <property type="resolution" value="2.69 A"/>
    <property type="chains" value="B/D=1-445"/>
</dbReference>
<dbReference type="PDB" id="7CE8">
    <property type="method" value="X-ray"/>
    <property type="resolution" value="2.73 A"/>
    <property type="chains" value="B/D=1-445"/>
</dbReference>
<dbReference type="PDB" id="7CEK">
    <property type="method" value="X-ray"/>
    <property type="resolution" value="2.70 A"/>
    <property type="chains" value="B/D=1-445"/>
</dbReference>
<dbReference type="PDB" id="7CLD">
    <property type="method" value="X-ray"/>
    <property type="resolution" value="2.61 A"/>
    <property type="chains" value="B/D=1-445"/>
</dbReference>
<dbReference type="PDB" id="7CNM">
    <property type="method" value="X-ray"/>
    <property type="resolution" value="2.44 A"/>
    <property type="chains" value="B/D=1-445"/>
</dbReference>
<dbReference type="PDB" id="7CNN">
    <property type="method" value="X-ray"/>
    <property type="resolution" value="2.50 A"/>
    <property type="chains" value="B/D=1-445"/>
</dbReference>
<dbReference type="PDB" id="7CNO">
    <property type="method" value="X-ray"/>
    <property type="resolution" value="2.50 A"/>
    <property type="chains" value="B/D=1-445"/>
</dbReference>
<dbReference type="PDB" id="7DAD">
    <property type="method" value="X-ray"/>
    <property type="resolution" value="2.85 A"/>
    <property type="chains" value="B/D=1-445"/>
</dbReference>
<dbReference type="PDB" id="7DAE">
    <property type="method" value="X-ray"/>
    <property type="resolution" value="2.39 A"/>
    <property type="chains" value="B/D=1-445"/>
</dbReference>
<dbReference type="PDB" id="7DAF">
    <property type="method" value="X-ray"/>
    <property type="resolution" value="2.40 A"/>
    <property type="chains" value="B/D=1-445"/>
</dbReference>
<dbReference type="PDB" id="7DB9">
    <property type="method" value="X-ray"/>
    <property type="resolution" value="2.85 A"/>
    <property type="chains" value="B/D=1-445"/>
</dbReference>
<dbReference type="PDB" id="7DBA">
    <property type="method" value="X-ray"/>
    <property type="resolution" value="2.46 A"/>
    <property type="chains" value="B/D=1-445"/>
</dbReference>
<dbReference type="PDB" id="7DBB">
    <property type="method" value="X-ray"/>
    <property type="resolution" value="2.81 A"/>
    <property type="chains" value="B/D=1-445"/>
</dbReference>
<dbReference type="PDB" id="7DBC">
    <property type="method" value="X-ray"/>
    <property type="resolution" value="2.40 A"/>
    <property type="chains" value="B/D=1-445"/>
</dbReference>
<dbReference type="PDB" id="7DBD">
    <property type="method" value="X-ray"/>
    <property type="resolution" value="3.09 A"/>
    <property type="chains" value="B/D=1-445"/>
</dbReference>
<dbReference type="PDB" id="7DMZ">
    <property type="method" value="EM"/>
    <property type="resolution" value="4.30 A"/>
    <property type="chains" value="C/E/F=1-445"/>
</dbReference>
<dbReference type="PDB" id="7DN0">
    <property type="method" value="EM"/>
    <property type="resolution" value="3.50 A"/>
    <property type="chains" value="E/F=1-445"/>
</dbReference>
<dbReference type="PDB" id="7DP8">
    <property type="method" value="X-ray"/>
    <property type="resolution" value="2.45 A"/>
    <property type="chains" value="B/D=1-445"/>
</dbReference>
<dbReference type="PDB" id="7EMJ">
    <property type="method" value="X-ray"/>
    <property type="resolution" value="2.33 A"/>
    <property type="chains" value="B/D=1-445"/>
</dbReference>
<dbReference type="PDB" id="7EXC">
    <property type="method" value="X-ray"/>
    <property type="resolution" value="2.39 A"/>
    <property type="chains" value="B/D=1-445"/>
</dbReference>
<dbReference type="PDB" id="7L05">
    <property type="method" value="X-ray"/>
    <property type="resolution" value="2.21 A"/>
    <property type="chains" value="B/D=1-445"/>
</dbReference>
<dbReference type="PDB" id="7LZ7">
    <property type="method" value="X-ray"/>
    <property type="resolution" value="2.80 A"/>
    <property type="chains" value="B/D=1-445"/>
</dbReference>
<dbReference type="PDB" id="7LZ8">
    <property type="method" value="X-ray"/>
    <property type="resolution" value="2.92 A"/>
    <property type="chains" value="B/D=1-445"/>
</dbReference>
<dbReference type="PDB" id="7NB8">
    <property type="method" value="EM"/>
    <property type="resolution" value="4.40 A"/>
    <property type="chains" value="B=1-445"/>
</dbReference>
<dbReference type="PDB" id="7NBA">
    <property type="method" value="EM"/>
    <property type="resolution" value="4.00 A"/>
    <property type="chains" value="B=1-445"/>
</dbReference>
<dbReference type="PDB" id="7PQC">
    <property type="method" value="EM"/>
    <property type="resolution" value="4.10 A"/>
    <property type="chains" value="A/C/E/G/I/K/M=1-445"/>
</dbReference>
<dbReference type="PDB" id="7PQP">
    <property type="method" value="EM"/>
    <property type="resolution" value="4.10 A"/>
    <property type="chains" value="A/C/E/G/I/K/M=1-445"/>
</dbReference>
<dbReference type="PDB" id="7RS5">
    <property type="method" value="EM"/>
    <property type="resolution" value="3.90 A"/>
    <property type="chains" value="B/D/F/H/J/M/O/Q/S=1-445"/>
</dbReference>
<dbReference type="PDB" id="7RS6">
    <property type="method" value="EM"/>
    <property type="resolution" value="4.10 A"/>
    <property type="chains" value="B/D/F/H/J/M/O/Q/S=1-445"/>
</dbReference>
<dbReference type="PDB" id="7RX0">
    <property type="method" value="EM"/>
    <property type="resolution" value="3.89 A"/>
    <property type="chains" value="B=1-445"/>
</dbReference>
<dbReference type="PDB" id="7SGS">
    <property type="method" value="EM"/>
    <property type="resolution" value="3.30 A"/>
    <property type="chains" value="C=1-445"/>
</dbReference>
<dbReference type="PDB" id="7TQX">
    <property type="method" value="EM"/>
    <property type="resolution" value="2.80 A"/>
    <property type="chains" value="B=1-445"/>
</dbReference>
<dbReference type="PDB" id="7TQY">
    <property type="method" value="EM"/>
    <property type="resolution" value="2.60 A"/>
    <property type="chains" value="B=1-445"/>
</dbReference>
<dbReference type="PDB" id="7TQZ">
    <property type="method" value="EM"/>
    <property type="resolution" value="2.70 A"/>
    <property type="chains" value="B=1-445"/>
</dbReference>
<dbReference type="PDB" id="7TR0">
    <property type="method" value="EM"/>
    <property type="resolution" value="2.70 A"/>
    <property type="chains" value="B=1-445"/>
</dbReference>
<dbReference type="PDB" id="7TR1">
    <property type="method" value="EM"/>
    <property type="resolution" value="3.10 A"/>
    <property type="chains" value="B=1-445"/>
</dbReference>
<dbReference type="PDB" id="7TR2">
    <property type="method" value="EM"/>
    <property type="resolution" value="3.00 A"/>
    <property type="chains" value="B=1-445"/>
</dbReference>
<dbReference type="PDB" id="7TR3">
    <property type="method" value="EM"/>
    <property type="resolution" value="3.90 A"/>
    <property type="chains" value="B=1-445"/>
</dbReference>
<dbReference type="PDB" id="7TTD">
    <property type="method" value="X-ray"/>
    <property type="resolution" value="2.27 A"/>
    <property type="chains" value="B/D=1-433"/>
</dbReference>
<dbReference type="PDB" id="7TTE">
    <property type="method" value="X-ray"/>
    <property type="resolution" value="2.70 A"/>
    <property type="chains" value="B/D=1-433"/>
</dbReference>
<dbReference type="PDB" id="7TTF">
    <property type="method" value="X-ray"/>
    <property type="resolution" value="2.10 A"/>
    <property type="chains" value="B/D=1-433"/>
</dbReference>
<dbReference type="PDB" id="7U0F">
    <property type="method" value="EM"/>
    <property type="resolution" value="3.53 A"/>
    <property type="chains" value="B/D=1-445"/>
</dbReference>
<dbReference type="PDB" id="7X4N">
    <property type="method" value="X-ray"/>
    <property type="resolution" value="2.88 A"/>
    <property type="chains" value="B=1-445"/>
</dbReference>
<dbReference type="PDB" id="7XQX">
    <property type="method" value="X-ray"/>
    <property type="resolution" value="3.36 A"/>
    <property type="chains" value="B/D=1-445"/>
</dbReference>
<dbReference type="PDB" id="7XQY">
    <property type="method" value="X-ray"/>
    <property type="resolution" value="2.35 A"/>
    <property type="chains" value="B/D=1-445"/>
</dbReference>
<dbReference type="PDB" id="7XR0">
    <property type="method" value="X-ray"/>
    <property type="resolution" value="2.70 A"/>
    <property type="chains" value="B/D=1-445"/>
</dbReference>
<dbReference type="PDB" id="7XR1">
    <property type="method" value="X-ray"/>
    <property type="resolution" value="2.81 A"/>
    <property type="chains" value="B/D=1-445"/>
</dbReference>
<dbReference type="PDB" id="7YHN">
    <property type="method" value="X-ray"/>
    <property type="resolution" value="2.60 A"/>
    <property type="chains" value="B/D=1-445"/>
</dbReference>
<dbReference type="PDB" id="7YSN">
    <property type="method" value="EM"/>
    <property type="resolution" value="3.50 A"/>
    <property type="chains" value="B=1-445"/>
</dbReference>
<dbReference type="PDB" id="7YSO">
    <property type="method" value="EM"/>
    <property type="resolution" value="3.60 A"/>
    <property type="chains" value="B=1-445"/>
</dbReference>
<dbReference type="PDB" id="7YSP">
    <property type="method" value="EM"/>
    <property type="resolution" value="3.90 A"/>
    <property type="chains" value="B=1-445"/>
</dbReference>
<dbReference type="PDB" id="7Z2A">
    <property type="method" value="EM"/>
    <property type="resolution" value="4.30 A"/>
    <property type="chains" value="H=1-426"/>
</dbReference>
<dbReference type="PDB" id="7Z2B">
    <property type="method" value="EM"/>
    <property type="resolution" value="3.30 A"/>
    <property type="chains" value="H=1-426"/>
</dbReference>
<dbReference type="PDB" id="7Z2C">
    <property type="method" value="EM"/>
    <property type="resolution" value="4.10 A"/>
    <property type="chains" value="H=1-426"/>
</dbReference>
<dbReference type="PDB" id="8DIQ">
    <property type="method" value="X-ray"/>
    <property type="resolution" value="2.40 A"/>
    <property type="chains" value="B/D=1-445"/>
</dbReference>
<dbReference type="PDB" id="8JJB">
    <property type="method" value="X-ray"/>
    <property type="resolution" value="2.68 A"/>
    <property type="chains" value="B/D=1-431"/>
</dbReference>
<dbReference type="PDB" id="8JJC">
    <property type="method" value="X-ray"/>
    <property type="resolution" value="2.76 A"/>
    <property type="chains" value="B/D=1-431"/>
</dbReference>
<dbReference type="PDB" id="8QAU">
    <property type="method" value="EM"/>
    <property type="resolution" value="3.54 A"/>
    <property type="chains" value="D=1-445"/>
</dbReference>
<dbReference type="PDB" id="8RC1">
    <property type="method" value="EM"/>
    <property type="resolution" value="3.70 A"/>
    <property type="chains" value="B/D=1-430"/>
</dbReference>
<dbReference type="PDB" id="8RHB">
    <property type="method" value="EM"/>
    <property type="resolution" value="3.00 A"/>
    <property type="chains" value="B=1-445"/>
</dbReference>
<dbReference type="PDB" id="8RHH">
    <property type="method" value="EM"/>
    <property type="resolution" value="3.00 A"/>
    <property type="chains" value="B=1-445"/>
</dbReference>
<dbReference type="PDB" id="8RIK">
    <property type="method" value="EM"/>
    <property type="resolution" value="3.60 A"/>
    <property type="chains" value="B=1-445"/>
</dbReference>
<dbReference type="PDB" id="8RIZ">
    <property type="method" value="EM"/>
    <property type="resolution" value="3.60 A"/>
    <property type="chains" value="B=1-445"/>
</dbReference>
<dbReference type="PDB" id="8V4K">
    <property type="method" value="EM"/>
    <property type="resolution" value="3.10 A"/>
    <property type="chains" value="B/D=1-445"/>
</dbReference>
<dbReference type="PDB" id="8V4L">
    <property type="method" value="EM"/>
    <property type="resolution" value="2.90 A"/>
    <property type="chains" value="B/D=1-445"/>
</dbReference>
<dbReference type="PDB" id="8V4M">
    <property type="method" value="EM"/>
    <property type="resolution" value="3.00 A"/>
    <property type="chains" value="B/D=1-445"/>
</dbReference>
<dbReference type="PDB" id="8X9P">
    <property type="method" value="EM"/>
    <property type="resolution" value="3.54 A"/>
    <property type="chains" value="B=1-427"/>
</dbReference>
<dbReference type="PDB" id="9DUQ">
    <property type="method" value="EM"/>
    <property type="resolution" value="2.80 A"/>
    <property type="chains" value="B/D/F/H/J/L/N/P/R=1-427"/>
</dbReference>
<dbReference type="PDB" id="9GNQ">
    <property type="method" value="EM"/>
    <property type="resolution" value="2.90 A"/>
    <property type="chains" value="B=1-445"/>
</dbReference>
<dbReference type="PDB" id="9IM5">
    <property type="method" value="X-ray"/>
    <property type="resolution" value="2.86 A"/>
    <property type="chains" value="B/D=1-445"/>
</dbReference>
<dbReference type="PDB" id="9IMO">
    <property type="method" value="X-ray"/>
    <property type="resolution" value="2.75 A"/>
    <property type="chains" value="B/D=1-431"/>
</dbReference>
<dbReference type="PDBsum" id="1FFX"/>
<dbReference type="PDBsum" id="1IA0"/>
<dbReference type="PDBsum" id="1JFF"/>
<dbReference type="PDBsum" id="1TUB"/>
<dbReference type="PDBsum" id="2HXF"/>
<dbReference type="PDBsum" id="2HXH"/>
<dbReference type="PDBsum" id="3EDL"/>
<dbReference type="PDBsum" id="3J6E"/>
<dbReference type="PDBsum" id="3J6F"/>
<dbReference type="PDBsum" id="3J6G"/>
<dbReference type="PDBsum" id="3J6H"/>
<dbReference type="PDBsum" id="3J6P"/>
<dbReference type="PDBsum" id="3J7I"/>
<dbReference type="PDBsum" id="3JAK"/>
<dbReference type="PDBsum" id="3JAL"/>
<dbReference type="PDBsum" id="3JAR"/>
<dbReference type="PDBsum" id="3JAS"/>
<dbReference type="PDBsum" id="3JAT"/>
<dbReference type="PDBsum" id="3JAW"/>
<dbReference type="PDBsum" id="4ABO"/>
<dbReference type="PDBsum" id="4ZHQ"/>
<dbReference type="PDBsum" id="4ZI7"/>
<dbReference type="PDBsum" id="4ZOL"/>
<dbReference type="PDBsum" id="5BMV"/>
<dbReference type="PDBsum" id="5FNV"/>
<dbReference type="PDBsum" id="5HNW"/>
<dbReference type="PDBsum" id="5HNX"/>
<dbReference type="PDBsum" id="5HNY"/>
<dbReference type="PDBsum" id="5HNZ"/>
<dbReference type="PDBsum" id="5JCB"/>
<dbReference type="PDBsum" id="5JQG"/>
<dbReference type="PDBsum" id="5KMG"/>
<dbReference type="PDBsum" id="5MM4"/>
<dbReference type="PDBsum" id="5MM7"/>
<dbReference type="PDBsum" id="5OAM"/>
<dbReference type="PDBsum" id="5OCU"/>
<dbReference type="PDBsum" id="5OGC"/>
<dbReference type="PDBsum" id="5SYC"/>
<dbReference type="PDBsum" id="5SYE"/>
<dbReference type="PDBsum" id="5SYF"/>
<dbReference type="PDBsum" id="5SYG"/>
<dbReference type="PDBsum" id="5XIW"/>
<dbReference type="PDBsum" id="5XKE"/>
<dbReference type="PDBsum" id="5XKF"/>
<dbReference type="PDBsum" id="5XKG"/>
<dbReference type="PDBsum" id="5XKH"/>
<dbReference type="PDBsum" id="5XP3"/>
<dbReference type="PDBsum" id="5XXT"/>
<dbReference type="PDBsum" id="5XXV"/>
<dbReference type="PDBsum" id="5XXW"/>
<dbReference type="PDBsum" id="5XXX"/>
<dbReference type="PDBsum" id="5YL2"/>
<dbReference type="PDBsum" id="5YLJ"/>
<dbReference type="PDBsum" id="5YLS"/>
<dbReference type="PDBsum" id="6B0C"/>
<dbReference type="PDBsum" id="6B0I"/>
<dbReference type="PDBsum" id="6B0L"/>
<dbReference type="PDBsum" id="6BJC"/>
<dbReference type="PDBsum" id="6BR1"/>
<dbReference type="PDBsum" id="6BRF"/>
<dbReference type="PDBsum" id="6BRY"/>
<dbReference type="PDBsum" id="6BS2"/>
<dbReference type="PDBsum" id="6CVJ"/>
<dbReference type="PDBsum" id="6CVN"/>
<dbReference type="PDBsum" id="6D88"/>
<dbReference type="PDBsum" id="6DPU"/>
<dbReference type="PDBsum" id="6DPV"/>
<dbReference type="PDBsum" id="6DPW"/>
<dbReference type="PDBsum" id="6EVW"/>
<dbReference type="PDBsum" id="6EVX"/>
<dbReference type="PDBsum" id="6EVY"/>
<dbReference type="PDBsum" id="6EVZ"/>
<dbReference type="PDBsum" id="6EW0"/>
<dbReference type="PDBsum" id="6KIO"/>
<dbReference type="PDBsum" id="6KIQ"/>
<dbReference type="PDBsum" id="6KPP"/>
<dbReference type="PDBsum" id="6LS4"/>
<dbReference type="PDBsum" id="6LSM"/>
<dbReference type="PDBsum" id="6LSN"/>
<dbReference type="PDBsum" id="6MLQ"/>
<dbReference type="PDBsum" id="6MLR"/>
<dbReference type="PDBsum" id="6MZE"/>
<dbReference type="PDBsum" id="6MZF"/>
<dbReference type="PDBsum" id="6MZG"/>
<dbReference type="PDBsum" id="6NNG"/>
<dbReference type="PDBsum" id="6O2Q"/>
<dbReference type="PDBsum" id="6O2R"/>
<dbReference type="PDBsum" id="6O2S"/>
<dbReference type="PDBsum" id="6O2T"/>
<dbReference type="PDBsum" id="6O5M"/>
<dbReference type="PDBsum" id="6O5N"/>
<dbReference type="PDBsum" id="6O61"/>
<dbReference type="PDBsum" id="6PC4"/>
<dbReference type="PDBsum" id="6RZA"/>
<dbReference type="PDBsum" id="6RZB"/>
<dbReference type="PDBsum" id="6TA3"/>
<dbReference type="PDBsum" id="6TA4"/>
<dbReference type="PDBsum" id="6TIW"/>
<dbReference type="PDBsum" id="6VPO"/>
<dbReference type="PDBsum" id="6VPP"/>
<dbReference type="PDBsum" id="6X1C"/>
<dbReference type="PDBsum" id="6X1E"/>
<dbReference type="PDBsum" id="6X1F"/>
<dbReference type="PDBsum" id="6XER"/>
<dbReference type="PDBsum" id="6XES"/>
<dbReference type="PDBsum" id="6XET"/>
<dbReference type="PDBsum" id="6Y4M"/>
<dbReference type="PDBsum" id="6Y4N"/>
<dbReference type="PDBsum" id="6ZPI"/>
<dbReference type="PDBsum" id="7CBZ"/>
<dbReference type="PDBsum" id="7CDA"/>
<dbReference type="PDBsum" id="7CE6"/>
<dbReference type="PDBsum" id="7CE8"/>
<dbReference type="PDBsum" id="7CEK"/>
<dbReference type="PDBsum" id="7CLD"/>
<dbReference type="PDBsum" id="7CNM"/>
<dbReference type="PDBsum" id="7CNN"/>
<dbReference type="PDBsum" id="7CNO"/>
<dbReference type="PDBsum" id="7DAD"/>
<dbReference type="PDBsum" id="7DAE"/>
<dbReference type="PDBsum" id="7DAF"/>
<dbReference type="PDBsum" id="7DB9"/>
<dbReference type="PDBsum" id="7DBA"/>
<dbReference type="PDBsum" id="7DBB"/>
<dbReference type="PDBsum" id="7DBC"/>
<dbReference type="PDBsum" id="7DBD"/>
<dbReference type="PDBsum" id="7DMZ"/>
<dbReference type="PDBsum" id="7DN0"/>
<dbReference type="PDBsum" id="7DP8"/>
<dbReference type="PDBsum" id="7EMJ"/>
<dbReference type="PDBsum" id="7EXC"/>
<dbReference type="PDBsum" id="7L05"/>
<dbReference type="PDBsum" id="7LZ7"/>
<dbReference type="PDBsum" id="7LZ8"/>
<dbReference type="PDBsum" id="7NB8"/>
<dbReference type="PDBsum" id="7NBA"/>
<dbReference type="PDBsum" id="7PQC"/>
<dbReference type="PDBsum" id="7PQP"/>
<dbReference type="PDBsum" id="7RS5"/>
<dbReference type="PDBsum" id="7RS6"/>
<dbReference type="PDBsum" id="7RX0"/>
<dbReference type="PDBsum" id="7SGS"/>
<dbReference type="PDBsum" id="7TQX"/>
<dbReference type="PDBsum" id="7TQY"/>
<dbReference type="PDBsum" id="7TQZ"/>
<dbReference type="PDBsum" id="7TR0"/>
<dbReference type="PDBsum" id="7TR1"/>
<dbReference type="PDBsum" id="7TR2"/>
<dbReference type="PDBsum" id="7TR3"/>
<dbReference type="PDBsum" id="7TTD"/>
<dbReference type="PDBsum" id="7TTE"/>
<dbReference type="PDBsum" id="7TTF"/>
<dbReference type="PDBsum" id="7U0F"/>
<dbReference type="PDBsum" id="7X4N"/>
<dbReference type="PDBsum" id="7XQX"/>
<dbReference type="PDBsum" id="7XQY"/>
<dbReference type="PDBsum" id="7XR0"/>
<dbReference type="PDBsum" id="7XR1"/>
<dbReference type="PDBsum" id="7YHN"/>
<dbReference type="PDBsum" id="7YSN"/>
<dbReference type="PDBsum" id="7YSO"/>
<dbReference type="PDBsum" id="7YSP"/>
<dbReference type="PDBsum" id="7Z2A"/>
<dbReference type="PDBsum" id="7Z2B"/>
<dbReference type="PDBsum" id="7Z2C"/>
<dbReference type="PDBsum" id="8DIQ"/>
<dbReference type="PDBsum" id="8JJB"/>
<dbReference type="PDBsum" id="8JJC"/>
<dbReference type="PDBsum" id="8QAU"/>
<dbReference type="PDBsum" id="8RC1"/>
<dbReference type="PDBsum" id="8RHB"/>
<dbReference type="PDBsum" id="8RHH"/>
<dbReference type="PDBsum" id="8RIK"/>
<dbReference type="PDBsum" id="8RIZ"/>
<dbReference type="PDBsum" id="8V4K"/>
<dbReference type="PDBsum" id="8V4L"/>
<dbReference type="PDBsum" id="8V4M"/>
<dbReference type="PDBsum" id="8X9P"/>
<dbReference type="PDBsum" id="9DUQ"/>
<dbReference type="PDBsum" id="9GNQ"/>
<dbReference type="PDBsum" id="9IM5"/>
<dbReference type="PDBsum" id="9IMO"/>
<dbReference type="EMDB" id="EMD-0612"/>
<dbReference type="EMDB" id="EMD-0613"/>
<dbReference type="EMDB" id="EMD-0614"/>
<dbReference type="EMDB" id="EMD-0615"/>
<dbReference type="EMDB" id="EMD-10060"/>
<dbReference type="EMDB" id="EMD-10061"/>
<dbReference type="EMDB" id="EMD-10421"/>
<dbReference type="EMDB" id="EMD-10422"/>
<dbReference type="EMDB" id="EMD-11340"/>
<dbReference type="EMDB" id="EMD-12257"/>
<dbReference type="EMDB" id="EMD-12258"/>
<dbReference type="EMDB" id="EMD-14459"/>
<dbReference type="EMDB" id="EMD-14460"/>
<dbReference type="EMDB" id="EMD-14461"/>
<dbReference type="EMDB" id="EMD-18304"/>
<dbReference type="EMDB" id="EMD-19042"/>
<dbReference type="EMDB" id="EMD-19043"/>
<dbReference type="EMDB" id="EMD-19044"/>
<dbReference type="EMDB" id="EMD-19174"/>
<dbReference type="EMDB" id="EMD-19176"/>
<dbReference type="EMDB" id="EMD-19188"/>
<dbReference type="EMDB" id="EMD-19192"/>
<dbReference type="EMDB" id="EMD-2005"/>
<dbReference type="EMDB" id="EMD-21314"/>
<dbReference type="EMDB" id="EMD-21315"/>
<dbReference type="EMDB" id="EMD-24666"/>
<dbReference type="EMDB" id="EMD-24667"/>
<dbReference type="EMDB" id="EMD-24721"/>
<dbReference type="EMDB" id="EMD-25120"/>
<dbReference type="EMDB" id="EMD-26257"/>
<dbReference type="EMDB" id="EMD-2697"/>
<dbReference type="EMDB" id="EMD-2912"/>
<dbReference type="EMDB" id="EMD-2915"/>
<dbReference type="EMDB" id="EMD-2916"/>
<dbReference type="EMDB" id="EMD-2918"/>
<dbReference type="EMDB" id="EMD-2919"/>
<dbReference type="EMDB" id="EMD-2920"/>
<dbReference type="EMDB" id="EMD-30775"/>
<dbReference type="EMDB" id="EMD-30776"/>
<dbReference type="EMDB" id="EMD-34077"/>
<dbReference type="EMDB" id="EMD-34078"/>
<dbReference type="EMDB" id="EMD-34079"/>
<dbReference type="EMDB" id="EMD-3529"/>
<dbReference type="EMDB" id="EMD-3530"/>
<dbReference type="EMDB" id="EMD-3778"/>
<dbReference type="EMDB" id="EMD-3780"/>
<dbReference type="EMDB" id="EMD-3803"/>
<dbReference type="EMDB" id="EMD-38178"/>
<dbReference type="EMDB" id="EMD-3961"/>
<dbReference type="EMDB" id="EMD-3962"/>
<dbReference type="EMDB" id="EMD-3963"/>
<dbReference type="EMDB" id="EMD-3964"/>
<dbReference type="EMDB" id="EMD-3965"/>
<dbReference type="EMDB" id="EMD-41169"/>
<dbReference type="EMDB" id="EMD-42971"/>
<dbReference type="EMDB" id="EMD-42972"/>
<dbReference type="EMDB" id="EMD-42973"/>
<dbReference type="EMDB" id="EMD-47173"/>
<dbReference type="EMDB" id="EMD-5027"/>
<dbReference type="EMDB" id="EMD-51477"/>
<dbReference type="EMDB" id="EMD-5895"/>
<dbReference type="EMDB" id="EMD-5896"/>
<dbReference type="EMDB" id="EMD-5897"/>
<dbReference type="EMDB" id="EMD-5916"/>
<dbReference type="EMDB" id="EMD-6347"/>
<dbReference type="EMDB" id="EMD-6348"/>
<dbReference type="EMDB" id="EMD-6349"/>
<dbReference type="EMDB" id="EMD-6350"/>
<dbReference type="EMDB" id="EMD-6351"/>
<dbReference type="EMDB" id="EMD-6352"/>
<dbReference type="EMDB" id="EMD-6353"/>
<dbReference type="EMDB" id="EMD-6354"/>
<dbReference type="EMDB" id="EMD-6355"/>
<dbReference type="EMDB" id="EMD-6779"/>
<dbReference type="EMDB" id="EMD-6781"/>
<dbReference type="EMDB" id="EMD-6782"/>
<dbReference type="EMDB" id="EMD-6783"/>
<dbReference type="EMDB" id="EMD-7101"/>
<dbReference type="EMDB" id="EMD-7769"/>
<dbReference type="EMDB" id="EMD-7771"/>
<dbReference type="EMDB" id="EMD-7973"/>
<dbReference type="EMDB" id="EMD-7974"/>
<dbReference type="EMDB" id="EMD-7975"/>
<dbReference type="EMDB" id="EMD-8266"/>
<dbReference type="EMDB" id="EMD-8320"/>
<dbReference type="EMDB" id="EMD-8321"/>
<dbReference type="EMDB" id="EMD-8322"/>
<dbReference type="EMDB" id="EMD-8323"/>
<dbReference type="EMDB" id="EMD-9140"/>
<dbReference type="EMDB" id="EMD-9141"/>
<dbReference type="EMDB" id="EMD-9996"/>
<dbReference type="EMDB" id="EMD-9997"/>
<dbReference type="SMR" id="P02554"/>
<dbReference type="FunCoup" id="P02554">
    <property type="interactions" value="95"/>
</dbReference>
<dbReference type="IntAct" id="P02554">
    <property type="interactions" value="2"/>
</dbReference>
<dbReference type="STRING" id="9823.ENSSSCP00000049151"/>
<dbReference type="BindingDB" id="P02554"/>
<dbReference type="ChEMBL" id="CHEMBL2788"/>
<dbReference type="DrugCentral" id="P02554"/>
<dbReference type="PaxDb" id="9823-ENSSSCP00000001076"/>
<dbReference type="PeptideAtlas" id="P02554"/>
<dbReference type="ABCD" id="P02554">
    <property type="antibodies" value="1 sequenced antibody"/>
</dbReference>
<dbReference type="eggNOG" id="KOG1375">
    <property type="taxonomic scope" value="Eukaryota"/>
</dbReference>
<dbReference type="InParanoid" id="P02554"/>
<dbReference type="CD-CODE" id="43F5F736">
    <property type="entry name" value="Synthetic Condensate 000068"/>
</dbReference>
<dbReference type="EvolutionaryTrace" id="P02554"/>
<dbReference type="Proteomes" id="UP000008227">
    <property type="component" value="Unplaced"/>
</dbReference>
<dbReference type="Proteomes" id="UP000314985">
    <property type="component" value="Unplaced"/>
</dbReference>
<dbReference type="Proteomes" id="UP000694570">
    <property type="component" value="Unplaced"/>
</dbReference>
<dbReference type="Proteomes" id="UP000694571">
    <property type="component" value="Unplaced"/>
</dbReference>
<dbReference type="Proteomes" id="UP000694720">
    <property type="component" value="Unplaced"/>
</dbReference>
<dbReference type="Proteomes" id="UP000694722">
    <property type="component" value="Unplaced"/>
</dbReference>
<dbReference type="Proteomes" id="UP000694723">
    <property type="component" value="Unplaced"/>
</dbReference>
<dbReference type="Proteomes" id="UP000694724">
    <property type="component" value="Unplaced"/>
</dbReference>
<dbReference type="Proteomes" id="UP000694725">
    <property type="component" value="Unplaced"/>
</dbReference>
<dbReference type="Proteomes" id="UP000694726">
    <property type="component" value="Unplaced"/>
</dbReference>
<dbReference type="Proteomes" id="UP000694727">
    <property type="component" value="Unplaced"/>
</dbReference>
<dbReference type="Proteomes" id="UP000694728">
    <property type="component" value="Unplaced"/>
</dbReference>
<dbReference type="GO" id="GO:0005737">
    <property type="term" value="C:cytoplasm"/>
    <property type="evidence" value="ECO:0000318"/>
    <property type="project" value="GO_Central"/>
</dbReference>
<dbReference type="GO" id="GO:0005874">
    <property type="term" value="C:microtubule"/>
    <property type="evidence" value="ECO:0000318"/>
    <property type="project" value="GO_Central"/>
</dbReference>
<dbReference type="GO" id="GO:0005525">
    <property type="term" value="F:GTP binding"/>
    <property type="evidence" value="ECO:0000318"/>
    <property type="project" value="GO_Central"/>
</dbReference>
<dbReference type="GO" id="GO:0003924">
    <property type="term" value="F:GTPase activity"/>
    <property type="evidence" value="ECO:0007669"/>
    <property type="project" value="InterPro"/>
</dbReference>
<dbReference type="GO" id="GO:0046872">
    <property type="term" value="F:metal ion binding"/>
    <property type="evidence" value="ECO:0007669"/>
    <property type="project" value="UniProtKB-KW"/>
</dbReference>
<dbReference type="GO" id="GO:0005200">
    <property type="term" value="F:structural constituent of cytoskeleton"/>
    <property type="evidence" value="ECO:0000318"/>
    <property type="project" value="GO_Central"/>
</dbReference>
<dbReference type="GO" id="GO:0000226">
    <property type="term" value="P:microtubule cytoskeleton organization"/>
    <property type="evidence" value="ECO:0000318"/>
    <property type="project" value="GO_Central"/>
</dbReference>
<dbReference type="GO" id="GO:0000278">
    <property type="term" value="P:mitotic cell cycle"/>
    <property type="evidence" value="ECO:0000318"/>
    <property type="project" value="GO_Central"/>
</dbReference>
<dbReference type="GO" id="GO:0001764">
    <property type="term" value="P:neuron migration"/>
    <property type="evidence" value="ECO:0000318"/>
    <property type="project" value="GO_Central"/>
</dbReference>
<dbReference type="CDD" id="cd02187">
    <property type="entry name" value="beta_tubulin"/>
    <property type="match status" value="1"/>
</dbReference>
<dbReference type="FunFam" id="1.10.287.600:FF:000006">
    <property type="entry name" value="Tubulin beta chain"/>
    <property type="match status" value="1"/>
</dbReference>
<dbReference type="FunFam" id="3.30.1330.20:FF:000002">
    <property type="entry name" value="Tubulin beta chain"/>
    <property type="match status" value="1"/>
</dbReference>
<dbReference type="FunFam" id="3.40.50.1440:FF:000003">
    <property type="entry name" value="Tubulin beta chain"/>
    <property type="match status" value="1"/>
</dbReference>
<dbReference type="Gene3D" id="1.10.287.600">
    <property type="entry name" value="Helix hairpin bin"/>
    <property type="match status" value="1"/>
</dbReference>
<dbReference type="Gene3D" id="3.30.1330.20">
    <property type="entry name" value="Tubulin/FtsZ, C-terminal domain"/>
    <property type="match status" value="1"/>
</dbReference>
<dbReference type="Gene3D" id="3.40.50.1440">
    <property type="entry name" value="Tubulin/FtsZ, GTPase domain"/>
    <property type="match status" value="1"/>
</dbReference>
<dbReference type="InterPro" id="IPR013838">
    <property type="entry name" value="Beta-tubulin_BS"/>
</dbReference>
<dbReference type="InterPro" id="IPR002453">
    <property type="entry name" value="Beta_tubulin"/>
</dbReference>
<dbReference type="InterPro" id="IPR008280">
    <property type="entry name" value="Tub_FtsZ_C"/>
</dbReference>
<dbReference type="InterPro" id="IPR000217">
    <property type="entry name" value="Tubulin"/>
</dbReference>
<dbReference type="InterPro" id="IPR037103">
    <property type="entry name" value="Tubulin/FtsZ-like_C"/>
</dbReference>
<dbReference type="InterPro" id="IPR018316">
    <property type="entry name" value="Tubulin/FtsZ_2-layer-sand-dom"/>
</dbReference>
<dbReference type="InterPro" id="IPR036525">
    <property type="entry name" value="Tubulin/FtsZ_GTPase_sf"/>
</dbReference>
<dbReference type="InterPro" id="IPR023123">
    <property type="entry name" value="Tubulin_C"/>
</dbReference>
<dbReference type="InterPro" id="IPR017975">
    <property type="entry name" value="Tubulin_CS"/>
</dbReference>
<dbReference type="InterPro" id="IPR003008">
    <property type="entry name" value="Tubulin_FtsZ_GTPase"/>
</dbReference>
<dbReference type="PANTHER" id="PTHR11588">
    <property type="entry name" value="TUBULIN"/>
    <property type="match status" value="1"/>
</dbReference>
<dbReference type="Pfam" id="PF00091">
    <property type="entry name" value="Tubulin"/>
    <property type="match status" value="1"/>
</dbReference>
<dbReference type="Pfam" id="PF03953">
    <property type="entry name" value="Tubulin_C"/>
    <property type="match status" value="1"/>
</dbReference>
<dbReference type="PRINTS" id="PR01163">
    <property type="entry name" value="BETATUBULIN"/>
</dbReference>
<dbReference type="PRINTS" id="PR01161">
    <property type="entry name" value="TUBULIN"/>
</dbReference>
<dbReference type="SMART" id="SM00864">
    <property type="entry name" value="Tubulin"/>
    <property type="match status" value="1"/>
</dbReference>
<dbReference type="SMART" id="SM00865">
    <property type="entry name" value="Tubulin_C"/>
    <property type="match status" value="1"/>
</dbReference>
<dbReference type="SUPFAM" id="SSF55307">
    <property type="entry name" value="Tubulin C-terminal domain-like"/>
    <property type="match status" value="1"/>
</dbReference>
<dbReference type="SUPFAM" id="SSF52490">
    <property type="entry name" value="Tubulin nucleotide-binding domain-like"/>
    <property type="match status" value="1"/>
</dbReference>
<dbReference type="PROSITE" id="PS00227">
    <property type="entry name" value="TUBULIN"/>
    <property type="match status" value="1"/>
</dbReference>
<dbReference type="PROSITE" id="PS00228">
    <property type="entry name" value="TUBULIN_B_AUTOREG"/>
    <property type="match status" value="1"/>
</dbReference>
<accession>P02554</accession>
<comment type="function">
    <text evidence="12">Tubulin is the major constituent of microtubules, a cylinder consisting of laterally associated linear protofilaments composed of alpha- and beta-tubulin heterodimers (PubMed:7225365). Microtubules grow by the addition of GTP-tubulin dimers to the microtubule end, where a stabilizing cap forms (PubMed:7225365). Below the cap, tubulin dimers are in GDP-bound state, owing to GTPase activity of alpha-tubulin (PubMed:7225365).</text>
</comment>
<comment type="cofactor">
    <cofactor evidence="3">
        <name>Mg(2+)</name>
        <dbReference type="ChEBI" id="CHEBI:18420"/>
    </cofactor>
</comment>
<comment type="subunit">
    <text evidence="11 12">Dimer of alpha and beta chains (PubMed:7225365). A typical microtubule is a hollow water-filled tube with an outer diameter of 25 nm and an inner diameter of 15 nM. Alpha-beta heterodimers associate head-to-tail to form protofilaments running lengthwise along the microtubule wall with the beta-tubulin subunit facing the microtubule plus end conferring a structural polarity. Microtubules usually have 13 protofilaments but different protofilament numbers can be found in some organisms and specialized cells. Interacts with NCKAP5L (PubMed:26482847).</text>
</comment>
<comment type="subcellular location">
    <subcellularLocation>
        <location evidence="12">Cytoplasm</location>
        <location evidence="12">Cytoskeleton</location>
    </subcellularLocation>
</comment>
<comment type="domain">
    <text evidence="2">The MREI motif is common among all beta-tubulin isoforms and may be critical for tubulin autoregulation.</text>
</comment>
<comment type="PTM">
    <text evidence="1">Some glutamate residues at the C-terminus are polyglycylated, resulting in polyglycine chains on the gamma-carboxyl group. Glycylation is mainly limited to tubulin incorporated into axonemes (cilia and flagella) whereas glutamylation is prevalent in neuronal cells, centrioles, axonemes, and the mitotic spindle. Both modifications can coexist on the same protein on adjacent residues, and lowering polyglycylation levels increases polyglutamylation, and reciprocally. Cilia and flagella glycylation is required for their stability and maintenance. Flagella glycylation controls sperm motility.</text>
</comment>
<comment type="PTM">
    <text evidence="1 9">Some glutamate residues at the C-terminus are polyglutamylated, resulting in polyglutamate chains on the gamma-carboxyl group (By similarity). Polyglutamylation plays a key role in microtubule severing by spastin (SPAST). SPAST preferentially recognizes and acts on microtubules decorated with short polyglutamate tails: severing activity by SPAST increases as the number of glutamates per tubulin rises from one to eight, but decreases beyond this glutamylation threshold (By similarity).</text>
</comment>
<comment type="PTM">
    <text evidence="8">Phosphorylated on Ser-172 by CDK1 during the cell cycle, from metaphase to telophase, but not in interphase. This phosphorylation inhibits tubulin incorporation into microtubules.</text>
</comment>
<comment type="miscellaneous">
    <text>The highly acidic C-terminal region may bind cations such as calcium.</text>
</comment>
<comment type="miscellaneous">
    <text>Pig brain contains at least two forms of this protein.</text>
</comment>
<comment type="similarity">
    <text evidence="13">Belongs to the tubulin family.</text>
</comment>
<evidence type="ECO:0000250" key="1">
    <source>
        <dbReference type="UniProtKB" id="A2AQ07"/>
    </source>
</evidence>
<evidence type="ECO:0000250" key="2">
    <source>
        <dbReference type="UniProtKB" id="P07437"/>
    </source>
</evidence>
<evidence type="ECO:0000250" key="3">
    <source>
        <dbReference type="UniProtKB" id="P68363"/>
    </source>
</evidence>
<evidence type="ECO:0000250" key="4">
    <source>
        <dbReference type="UniProtKB" id="P99024"/>
    </source>
</evidence>
<evidence type="ECO:0000250" key="5">
    <source>
        <dbReference type="UniProtKB" id="Q13509"/>
    </source>
</evidence>
<evidence type="ECO:0000250" key="6">
    <source>
        <dbReference type="UniProtKB" id="Q13885"/>
    </source>
</evidence>
<evidence type="ECO:0000250" key="7">
    <source>
        <dbReference type="UniProtKB" id="Q2T9S0"/>
    </source>
</evidence>
<evidence type="ECO:0000250" key="8">
    <source>
        <dbReference type="UniProtKB" id="Q3ZCM7"/>
    </source>
</evidence>
<evidence type="ECO:0000250" key="9">
    <source>
        <dbReference type="UniProtKB" id="Q71U36"/>
    </source>
</evidence>
<evidence type="ECO:0000256" key="10">
    <source>
        <dbReference type="SAM" id="MobiDB-lite"/>
    </source>
</evidence>
<evidence type="ECO:0000269" key="11">
    <source>
    </source>
</evidence>
<evidence type="ECO:0000269" key="12">
    <source>
    </source>
</evidence>
<evidence type="ECO:0000305" key="13"/>
<evidence type="ECO:0007744" key="14">
    <source>
        <dbReference type="PDB" id="5HNW"/>
    </source>
</evidence>
<evidence type="ECO:0007744" key="15">
    <source>
        <dbReference type="PDB" id="5HNX"/>
    </source>
</evidence>
<evidence type="ECO:0007744" key="16">
    <source>
        <dbReference type="PDB" id="5HNY"/>
    </source>
</evidence>
<evidence type="ECO:0007744" key="17">
    <source>
        <dbReference type="PDB" id="5HNZ"/>
    </source>
</evidence>
<evidence type="ECO:0007829" key="18">
    <source>
        <dbReference type="PDB" id="4ZOL"/>
    </source>
</evidence>
<evidence type="ECO:0007829" key="19">
    <source>
        <dbReference type="PDB" id="5XKG"/>
    </source>
</evidence>
<evidence type="ECO:0007829" key="20">
    <source>
        <dbReference type="PDB" id="5XKH"/>
    </source>
</evidence>
<evidence type="ECO:0007829" key="21">
    <source>
        <dbReference type="PDB" id="5YL2"/>
    </source>
</evidence>
<evidence type="ECO:0007829" key="22">
    <source>
        <dbReference type="PDB" id="7CBZ"/>
    </source>
</evidence>
<evidence type="ECO:0007829" key="23">
    <source>
        <dbReference type="PDB" id="7TTD"/>
    </source>
</evidence>
<evidence type="ECO:0007829" key="24">
    <source>
        <dbReference type="PDB" id="8V4K"/>
    </source>
</evidence>
<evidence type="ECO:0007829" key="25">
    <source>
        <dbReference type="PDB" id="8V4L"/>
    </source>
</evidence>
<reference key="1">
    <citation type="journal article" date="1981" name="Proc. Natl. Acad. Sci. U.S.A.">
        <title>Complete amino acid sequence of beta-tubulin from porcine brain.</title>
        <authorList>
            <person name="Krauhs E."/>
            <person name="Little M."/>
            <person name="Kempf T."/>
            <person name="Hofer-Warbinek R."/>
            <person name="Ade W."/>
            <person name="Ponstingl H."/>
        </authorList>
    </citation>
    <scope>PROTEIN SEQUENCE</scope>
    <source>
        <tissue>Brain</tissue>
    </source>
</reference>
<reference key="2">
    <citation type="journal article" date="1988" name="J. Biol. Chem.">
        <title>The GTP-binding peptide of beta-tubulin. Localization by direct photoaffinity labeling and comparison with nucleotide-binding proteins.</title>
        <authorList>
            <person name="Linse K."/>
            <person name="Mandelkow E.M."/>
        </authorList>
    </citation>
    <scope>PROTEIN SEQUENCE OF 63-77</scope>
</reference>
<reference key="3">
    <citation type="journal article" date="1983" name="Arch. Biochem. Biophys.">
        <title>Localization of the ATP binding site on alpha-tubulin.</title>
        <authorList>
            <person name="Zabrecky J.R."/>
            <person name="Cole R.D."/>
        </authorList>
    </citation>
    <scope>GUANINE NUCLEOTIDE-BINDING SITES</scope>
</reference>
<reference key="4">
    <citation type="journal article" date="2015" name="Biochem. Biophys. Res. Commun.">
        <title>Microtubule-bundling activity of the centrosomal protein, Cep169, and its binding to microtubules.</title>
        <authorList>
            <person name="Mori Y."/>
            <person name="Taniyama Y."/>
            <person name="Tanaka S."/>
            <person name="Fukuchi H."/>
            <person name="Terada Y."/>
        </authorList>
    </citation>
    <scope>INTERACTION WITH NCKAP5L</scope>
</reference>
<reference key="5">
    <citation type="journal article" date="1981" name="Biochemistry">
        <title>Kinetic analysis of guanosine 5'-triphosphate hydrolysis associated with tubulin polymerization.</title>
        <authorList>
            <person name="Carlier M.F."/>
            <person name="Pantaloni D."/>
        </authorList>
    </citation>
    <scope>FUNCTION</scope>
    <scope>SUBCELLULAR LOCATION</scope>
    <scope>SUBUNIT</scope>
</reference>
<reference key="6">
    <citation type="journal article" date="2000" name="Cell">
        <title>The 4 A X-ray structure of a tubulin:stathmin-like domain complex.</title>
        <authorList>
            <person name="Gigant B."/>
            <person name="Curmi P.A."/>
            <person name="Martin-Barbey C."/>
            <person name="Charbaut E."/>
            <person name="Lachkar S."/>
            <person name="Lebeau L."/>
            <person name="Siavoshian S."/>
            <person name="Sobel A."/>
            <person name="Knossow M."/>
        </authorList>
    </citation>
    <scope>X-RAY CRYSTALLOGRAPHY (3.95 ANGSTROMS)</scope>
</reference>
<reference key="7">
    <citation type="journal article" date="1998" name="Nature">
        <title>Structure of the alpha beta tubulin dimer by electron crystallography.</title>
        <authorList>
            <person name="Nogales E."/>
            <person name="Wolf S.G."/>
            <person name="Downing K.H."/>
        </authorList>
    </citation>
    <scope>STRUCTURE BY ELECTRON MICROSCOPY (3.7 ANGSTROMS) OF 1-427</scope>
</reference>
<reference key="8">
    <citation type="journal article" date="2000" name="Cell">
        <title>15 A resolution model of the monomeric kinesin motor, KIF1A.</title>
        <authorList>
            <person name="Kikkawa M."/>
            <person name="Okada Y."/>
            <person name="Hirokawa N."/>
        </authorList>
    </citation>
    <scope>STRUCTURE BY ELECTRON MICROSCOPY (15.0 ANGSTROMS)</scope>
</reference>
<reference key="9">
    <citation type="journal article" date="2001" name="J. Mol. Biol.">
        <title>Refined structure of alpha beta-tubulin at 3.5 A resolution.</title>
        <authorList>
            <person name="Loewe J."/>
            <person name="Li H."/>
            <person name="Downing K.H."/>
            <person name="Nogales E."/>
        </authorList>
    </citation>
    <scope>STRUCTURE BY ELECTRON MICROSCOPY (3.5 ANGSTROMS)</scope>
</reference>
<reference evidence="14 15 16 17" key="10">
    <citation type="journal article" date="2016" name="Structure">
        <title>Structural Basis of Backwards Motion in Kinesin-1-Kinesin-14 Chimera: Implication for Kinesin-14 Motility.</title>
        <authorList>
            <person name="Yamagishi M."/>
            <person name="Shigematsu H."/>
            <person name="Yokoyama T."/>
            <person name="Kikkawa M."/>
            <person name="Sugawa M."/>
            <person name="Aoki M."/>
            <person name="Shirouzu M."/>
            <person name="Yajima J."/>
            <person name="Nitta R."/>
        </authorList>
    </citation>
    <scope>STRUCTURE BY ELECTRON MICROSCOPY (5.80 ANGSTROMS) IN COMPLEX WITH ADP AND CHIMERIC CONSTRUCT OF DROSOPHILA NCD AND RAT KIF5C</scope>
</reference>
<protein>
    <recommendedName>
        <fullName>Tubulin beta chain</fullName>
    </recommendedName>
    <alternativeName>
        <fullName>Beta-tubulin</fullName>
    </alternativeName>
</protein>
<keyword id="KW-0002">3D-structure</keyword>
<keyword id="KW-0007">Acetylation</keyword>
<keyword id="KW-0963">Cytoplasm</keyword>
<keyword id="KW-0206">Cytoskeleton</keyword>
<keyword id="KW-0903">Direct protein sequencing</keyword>
<keyword id="KW-0342">GTP-binding</keyword>
<keyword id="KW-1017">Isopeptide bond</keyword>
<keyword id="KW-0460">Magnesium</keyword>
<keyword id="KW-0479">Metal-binding</keyword>
<keyword id="KW-0488">Methylation</keyword>
<keyword id="KW-0493">Microtubule</keyword>
<keyword id="KW-0547">Nucleotide-binding</keyword>
<keyword id="KW-0597">Phosphoprotein</keyword>
<keyword id="KW-1185">Reference proteome</keyword>
<keyword id="KW-0832">Ubl conjugation</keyword>
<proteinExistence type="evidence at protein level"/>
<feature type="chain" id="PRO_0000048261" description="Tubulin beta chain">
    <location>
        <begin position="1"/>
        <end position="445"/>
    </location>
</feature>
<feature type="region of interest" description="Disordered" evidence="10">
    <location>
        <begin position="424"/>
        <end position="445"/>
    </location>
</feature>
<feature type="short sequence motif" description="MREI motif" evidence="2">
    <location>
        <begin position="1"/>
        <end position="4"/>
    </location>
</feature>
<feature type="compositionally biased region" description="Acidic residues" evidence="10">
    <location>
        <begin position="429"/>
        <end position="445"/>
    </location>
</feature>
<feature type="binding site" evidence="5">
    <location>
        <position position="11"/>
    </location>
    <ligand>
        <name>GTP</name>
        <dbReference type="ChEBI" id="CHEBI:37565"/>
    </ligand>
</feature>
<feature type="binding site" evidence="3">
    <location>
        <position position="69"/>
    </location>
    <ligand>
        <name>GTP</name>
        <dbReference type="ChEBI" id="CHEBI:37565"/>
    </ligand>
</feature>
<feature type="binding site" evidence="3">
    <location>
        <position position="69"/>
    </location>
    <ligand>
        <name>Mg(2+)</name>
        <dbReference type="ChEBI" id="CHEBI:18420"/>
    </ligand>
</feature>
<feature type="binding site" evidence="5">
    <location>
        <position position="138"/>
    </location>
    <ligand>
        <name>GTP</name>
        <dbReference type="ChEBI" id="CHEBI:37565"/>
    </ligand>
</feature>
<feature type="binding site" evidence="5">
    <location>
        <position position="142"/>
    </location>
    <ligand>
        <name>GTP</name>
        <dbReference type="ChEBI" id="CHEBI:37565"/>
    </ligand>
</feature>
<feature type="binding site" evidence="5">
    <location>
        <position position="143"/>
    </location>
    <ligand>
        <name>GTP</name>
        <dbReference type="ChEBI" id="CHEBI:37565"/>
    </ligand>
</feature>
<feature type="binding site" evidence="5">
    <location>
        <position position="144"/>
    </location>
    <ligand>
        <name>GTP</name>
        <dbReference type="ChEBI" id="CHEBI:37565"/>
    </ligand>
</feature>
<feature type="binding site" evidence="5">
    <location>
        <position position="204"/>
    </location>
    <ligand>
        <name>GTP</name>
        <dbReference type="ChEBI" id="CHEBI:37565"/>
    </ligand>
</feature>
<feature type="binding site" evidence="5">
    <location>
        <position position="226"/>
    </location>
    <ligand>
        <name>GTP</name>
        <dbReference type="ChEBI" id="CHEBI:37565"/>
    </ligand>
</feature>
<feature type="modified residue" description="Phosphoserine" evidence="4">
    <location>
        <position position="40"/>
    </location>
</feature>
<feature type="modified residue" description="N6-acetyllysine; alternate" evidence="2">
    <location>
        <position position="58"/>
    </location>
</feature>
<feature type="modified residue" description="N6-succinyllysine; alternate" evidence="4">
    <location>
        <position position="58"/>
    </location>
</feature>
<feature type="modified residue" description="Phosphoserine; by CDK1" evidence="6">
    <location>
        <position position="172"/>
    </location>
</feature>
<feature type="modified residue" description="Phosphothreonine" evidence="2">
    <location>
        <position position="285"/>
    </location>
</feature>
<feature type="modified residue" description="Phosphothreonine" evidence="2">
    <location>
        <position position="290"/>
    </location>
</feature>
<feature type="modified residue" description="Omega-N-methylarginine" evidence="2">
    <location>
        <position position="318"/>
    </location>
</feature>
<feature type="modified residue" description="5-glutamyl polyglutamate" evidence="7">
    <location>
        <position position="438"/>
    </location>
</feature>
<feature type="cross-link" description="Glycyl lysine isopeptide (Lys-Gly) (interchain with G-Cter in ubiquitin); alternate" evidence="2">
    <location>
        <position position="58"/>
    </location>
</feature>
<feature type="cross-link" description="Glycyl lysine isopeptide (Lys-Gly) (interchain with G-Cter in ubiquitin)" evidence="2">
    <location>
        <position position="324"/>
    </location>
</feature>
<feature type="sequence variant" description="In 2nd form.">
    <original>H</original>
    <variation>V</variation>
    <location>
        <position position="37"/>
    </location>
</feature>
<feature type="sequence variant" description="In 2nd form.">
    <original>N</original>
    <variation>S</variation>
    <location>
        <position position="48"/>
    </location>
</feature>
<feature type="sequence variant" description="In 2nd form.">
    <original>AGN</original>
    <variation>SSH</variation>
    <location>
        <begin position="55"/>
        <end position="57"/>
    </location>
</feature>
<feature type="sequence variant" description="In 2nd form.">
    <original>S</original>
    <variation>A</variation>
    <location>
        <position position="275"/>
    </location>
</feature>
<feature type="strand" evidence="21">
    <location>
        <begin position="3"/>
        <end position="9"/>
    </location>
</feature>
<feature type="helix" evidence="21">
    <location>
        <begin position="10"/>
        <end position="27"/>
    </location>
</feature>
<feature type="strand" evidence="21">
    <location>
        <begin position="34"/>
        <end position="36"/>
    </location>
</feature>
<feature type="helix" evidence="21">
    <location>
        <begin position="41"/>
        <end position="43"/>
    </location>
</feature>
<feature type="turn" evidence="21">
    <location>
        <begin position="44"/>
        <end position="46"/>
    </location>
</feature>
<feature type="helix" evidence="21">
    <location>
        <begin position="47"/>
        <end position="49"/>
    </location>
</feature>
<feature type="strand" evidence="21">
    <location>
        <begin position="51"/>
        <end position="53"/>
    </location>
</feature>
<feature type="strand" evidence="21">
    <location>
        <begin position="57"/>
        <end position="61"/>
    </location>
</feature>
<feature type="strand" evidence="21">
    <location>
        <begin position="63"/>
        <end position="70"/>
    </location>
</feature>
<feature type="helix" evidence="21">
    <location>
        <begin position="71"/>
        <end position="77"/>
    </location>
</feature>
<feature type="strand" evidence="18">
    <location>
        <begin position="79"/>
        <end position="81"/>
    </location>
</feature>
<feature type="helix" evidence="21">
    <location>
        <begin position="82"/>
        <end position="84"/>
    </location>
</feature>
<feature type="helix" evidence="21">
    <location>
        <begin position="87"/>
        <end position="89"/>
    </location>
</feature>
<feature type="strand" evidence="21">
    <location>
        <begin position="90"/>
        <end position="92"/>
    </location>
</feature>
<feature type="helix" evidence="21">
    <location>
        <begin position="101"/>
        <end position="105"/>
    </location>
</feature>
<feature type="helix" evidence="21">
    <location>
        <begin position="108"/>
        <end position="125"/>
    </location>
</feature>
<feature type="strand" evidence="21">
    <location>
        <begin position="128"/>
        <end position="142"/>
    </location>
</feature>
<feature type="helix" evidence="21">
    <location>
        <begin position="143"/>
        <end position="158"/>
    </location>
</feature>
<feature type="strand" evidence="21">
    <location>
        <begin position="162"/>
        <end position="170"/>
    </location>
</feature>
<feature type="helix" evidence="21">
    <location>
        <begin position="173"/>
        <end position="175"/>
    </location>
</feature>
<feature type="strand" evidence="25">
    <location>
        <begin position="178"/>
        <end position="180"/>
    </location>
</feature>
<feature type="helix" evidence="21">
    <location>
        <begin position="181"/>
        <end position="195"/>
    </location>
</feature>
<feature type="strand" evidence="21">
    <location>
        <begin position="197"/>
        <end position="203"/>
    </location>
</feature>
<feature type="helix" evidence="21">
    <location>
        <begin position="204"/>
        <end position="213"/>
    </location>
</feature>
<feature type="helix" evidence="21">
    <location>
        <begin position="222"/>
        <end position="241"/>
    </location>
</feature>
<feature type="strand" evidence="19">
    <location>
        <begin position="244"/>
        <end position="246"/>
    </location>
</feature>
<feature type="helix" evidence="21">
    <location>
        <begin position="250"/>
        <end position="257"/>
    </location>
</feature>
<feature type="strand" evidence="22">
    <location>
        <begin position="259"/>
        <end position="262"/>
    </location>
</feature>
<feature type="strand" evidence="21">
    <location>
        <begin position="265"/>
        <end position="272"/>
    </location>
</feature>
<feature type="strand" evidence="20">
    <location>
        <begin position="276"/>
        <end position="278"/>
    </location>
</feature>
<feature type="helix" evidence="25">
    <location>
        <begin position="279"/>
        <end position="281"/>
    </location>
</feature>
<feature type="helix" evidence="21">
    <location>
        <begin position="286"/>
        <end position="294"/>
    </location>
</feature>
<feature type="helix" evidence="21">
    <location>
        <begin position="296"/>
        <end position="298"/>
    </location>
</feature>
<feature type="strand" evidence="21">
    <location>
        <begin position="299"/>
        <end position="302"/>
    </location>
</feature>
<feature type="helix" evidence="21">
    <location>
        <begin position="305"/>
        <end position="307"/>
    </location>
</feature>
<feature type="strand" evidence="21">
    <location>
        <begin position="310"/>
        <end position="320"/>
    </location>
</feature>
<feature type="helix" evidence="21">
    <location>
        <begin position="323"/>
        <end position="336"/>
    </location>
</feature>
<feature type="helix" evidence="21">
    <location>
        <begin position="338"/>
        <end position="340"/>
    </location>
</feature>
<feature type="strand" evidence="23">
    <location>
        <begin position="345"/>
        <end position="347"/>
    </location>
</feature>
<feature type="strand" evidence="21">
    <location>
        <begin position="349"/>
        <end position="356"/>
    </location>
</feature>
<feature type="strand" evidence="21">
    <location>
        <begin position="362"/>
        <end position="371"/>
    </location>
</feature>
<feature type="helix" evidence="21">
    <location>
        <begin position="372"/>
        <end position="374"/>
    </location>
</feature>
<feature type="helix" evidence="21">
    <location>
        <begin position="375"/>
        <end position="389"/>
    </location>
</feature>
<feature type="turn" evidence="21">
    <location>
        <begin position="390"/>
        <end position="395"/>
    </location>
</feature>
<feature type="helix" evidence="21">
    <location>
        <begin position="396"/>
        <end position="399"/>
    </location>
</feature>
<feature type="turn" evidence="21">
    <location>
        <begin position="400"/>
        <end position="402"/>
    </location>
</feature>
<feature type="helix" evidence="21">
    <location>
        <begin position="405"/>
        <end position="427"/>
    </location>
</feature>
<feature type="strand" evidence="24">
    <location>
        <begin position="435"/>
        <end position="437"/>
    </location>
</feature>
<sequence length="445" mass="49861">MREIVHIQAGQCGNQIGAKFWEVISDEHGIDPTGSYHGDSDLQLERINVYYNEAAGNKYVPRAILVDLEPGTMDSVRSGPFGQIFRPDNFVFGQSGAGNNWAKGHYTEGAELVDSVLDVVRKESESCDCLQGFQLTHSLGGGTGSGMGTLLISKIREEYPDRIMNTFSVVPSPKVSDTVVEPYNATLSVHQLVENTDETYCIDNEALYDICFRTLKLTTPTYGDLNHLVSATMSGVTTCLRFPGQLNADLRKLAVNMVPFPRLHFFMPGFAPLTSRGSQQYRALTVPELTQQMFDAKNMMAACDPRHGRYLTVAAVFRGRMSMKEVDEQMLNVQNKNSSYFVEWIPNNVKTAVCDIPPRGLKMSATFIGNSTAIQELFKRISEQFTAMFRRKAFLHWYTGEGMDEMEFTEAESNMNDLVSEYQQYQDATADEQGEFEEEGEEDEA</sequence>
<organism>
    <name type="scientific">Sus scrofa</name>
    <name type="common">Pig</name>
    <dbReference type="NCBI Taxonomy" id="9823"/>
    <lineage>
        <taxon>Eukaryota</taxon>
        <taxon>Metazoa</taxon>
        <taxon>Chordata</taxon>
        <taxon>Craniata</taxon>
        <taxon>Vertebrata</taxon>
        <taxon>Euteleostomi</taxon>
        <taxon>Mammalia</taxon>
        <taxon>Eutheria</taxon>
        <taxon>Laurasiatheria</taxon>
        <taxon>Artiodactyla</taxon>
        <taxon>Suina</taxon>
        <taxon>Suidae</taxon>
        <taxon>Sus</taxon>
    </lineage>
</organism>
<name>TBB_PIG</name>